<dbReference type="EC" id="2.7.7.60" evidence="1"/>
<dbReference type="EC" id="4.6.1.12" evidence="1"/>
<dbReference type="EMBL" id="CP000524">
    <property type="protein sequence ID" value="ABM45054.1"/>
    <property type="molecule type" value="Genomic_DNA"/>
</dbReference>
<dbReference type="SMR" id="A1USA2"/>
<dbReference type="STRING" id="360095.BARBAKC583_0540"/>
<dbReference type="KEGG" id="bbk:BARBAKC583_0540"/>
<dbReference type="eggNOG" id="COG0245">
    <property type="taxonomic scope" value="Bacteria"/>
</dbReference>
<dbReference type="eggNOG" id="COG1211">
    <property type="taxonomic scope" value="Bacteria"/>
</dbReference>
<dbReference type="HOGENOM" id="CLU_042800_2_5_5"/>
<dbReference type="OrthoDB" id="9804336at2"/>
<dbReference type="UniPathway" id="UPA00056">
    <property type="reaction ID" value="UER00093"/>
</dbReference>
<dbReference type="UniPathway" id="UPA00056">
    <property type="reaction ID" value="UER00095"/>
</dbReference>
<dbReference type="Proteomes" id="UP000000643">
    <property type="component" value="Chromosome"/>
</dbReference>
<dbReference type="GO" id="GO:0008685">
    <property type="term" value="F:2-C-methyl-D-erythritol 2,4-cyclodiphosphate synthase activity"/>
    <property type="evidence" value="ECO:0007669"/>
    <property type="project" value="UniProtKB-UniRule"/>
</dbReference>
<dbReference type="GO" id="GO:0050518">
    <property type="term" value="F:2-C-methyl-D-erythritol 4-phosphate cytidylyltransferase activity"/>
    <property type="evidence" value="ECO:0007669"/>
    <property type="project" value="UniProtKB-UniRule"/>
</dbReference>
<dbReference type="GO" id="GO:0046872">
    <property type="term" value="F:metal ion binding"/>
    <property type="evidence" value="ECO:0007669"/>
    <property type="project" value="UniProtKB-KW"/>
</dbReference>
<dbReference type="GO" id="GO:0019288">
    <property type="term" value="P:isopentenyl diphosphate biosynthetic process, methylerythritol 4-phosphate pathway"/>
    <property type="evidence" value="ECO:0007669"/>
    <property type="project" value="UniProtKB-UniRule"/>
</dbReference>
<dbReference type="GO" id="GO:0016114">
    <property type="term" value="P:terpenoid biosynthetic process"/>
    <property type="evidence" value="ECO:0007669"/>
    <property type="project" value="InterPro"/>
</dbReference>
<dbReference type="CDD" id="cd02516">
    <property type="entry name" value="CDP-ME_synthetase"/>
    <property type="match status" value="1"/>
</dbReference>
<dbReference type="CDD" id="cd00554">
    <property type="entry name" value="MECDP_synthase"/>
    <property type="match status" value="1"/>
</dbReference>
<dbReference type="FunFam" id="3.90.550.10:FF:000003">
    <property type="entry name" value="2-C-methyl-D-erythritol 4-phosphate cytidylyltransferase"/>
    <property type="match status" value="1"/>
</dbReference>
<dbReference type="Gene3D" id="3.30.1330.50">
    <property type="entry name" value="2-C-methyl-D-erythritol 2,4-cyclodiphosphate synthase"/>
    <property type="match status" value="1"/>
</dbReference>
<dbReference type="Gene3D" id="3.90.550.10">
    <property type="entry name" value="Spore Coat Polysaccharide Biosynthesis Protein SpsA, Chain A"/>
    <property type="match status" value="1"/>
</dbReference>
<dbReference type="HAMAP" id="MF_00108">
    <property type="entry name" value="IspD"/>
    <property type="match status" value="1"/>
</dbReference>
<dbReference type="HAMAP" id="MF_01520">
    <property type="entry name" value="IspDF"/>
    <property type="match status" value="1"/>
</dbReference>
<dbReference type="HAMAP" id="MF_00107">
    <property type="entry name" value="IspF"/>
    <property type="match status" value="1"/>
</dbReference>
<dbReference type="InterPro" id="IPR001228">
    <property type="entry name" value="IspD"/>
</dbReference>
<dbReference type="InterPro" id="IPR026596">
    <property type="entry name" value="IspD/F"/>
</dbReference>
<dbReference type="InterPro" id="IPR034683">
    <property type="entry name" value="IspD/TarI"/>
</dbReference>
<dbReference type="InterPro" id="IPR003526">
    <property type="entry name" value="MECDP_synthase"/>
</dbReference>
<dbReference type="InterPro" id="IPR020555">
    <property type="entry name" value="MECDP_synthase_CS"/>
</dbReference>
<dbReference type="InterPro" id="IPR036571">
    <property type="entry name" value="MECDP_synthase_sf"/>
</dbReference>
<dbReference type="InterPro" id="IPR029044">
    <property type="entry name" value="Nucleotide-diphossugar_trans"/>
</dbReference>
<dbReference type="NCBIfam" id="TIGR00453">
    <property type="entry name" value="ispD"/>
    <property type="match status" value="1"/>
</dbReference>
<dbReference type="NCBIfam" id="TIGR00151">
    <property type="entry name" value="ispF"/>
    <property type="match status" value="1"/>
</dbReference>
<dbReference type="NCBIfam" id="NF006899">
    <property type="entry name" value="PRK09382.1"/>
    <property type="match status" value="1"/>
</dbReference>
<dbReference type="PANTHER" id="PTHR43181">
    <property type="entry name" value="2-C-METHYL-D-ERYTHRITOL 2,4-CYCLODIPHOSPHATE SYNTHASE, CHLOROPLASTIC"/>
    <property type="match status" value="1"/>
</dbReference>
<dbReference type="PANTHER" id="PTHR43181:SF1">
    <property type="entry name" value="2-C-METHYL-D-ERYTHRITOL 2,4-CYCLODIPHOSPHATE SYNTHASE, CHLOROPLASTIC"/>
    <property type="match status" value="1"/>
</dbReference>
<dbReference type="Pfam" id="PF01128">
    <property type="entry name" value="IspD"/>
    <property type="match status" value="1"/>
</dbReference>
<dbReference type="Pfam" id="PF02542">
    <property type="entry name" value="YgbB"/>
    <property type="match status" value="1"/>
</dbReference>
<dbReference type="SUPFAM" id="SSF69765">
    <property type="entry name" value="IpsF-like"/>
    <property type="match status" value="1"/>
</dbReference>
<dbReference type="SUPFAM" id="SSF53448">
    <property type="entry name" value="Nucleotide-diphospho-sugar transferases"/>
    <property type="match status" value="1"/>
</dbReference>
<dbReference type="PROSITE" id="PS01350">
    <property type="entry name" value="ISPF"/>
    <property type="match status" value="1"/>
</dbReference>
<organism>
    <name type="scientific">Bartonella bacilliformis (strain ATCC 35685 / KC583 / Herrer 020/F12,63)</name>
    <dbReference type="NCBI Taxonomy" id="360095"/>
    <lineage>
        <taxon>Bacteria</taxon>
        <taxon>Pseudomonadati</taxon>
        <taxon>Pseudomonadota</taxon>
        <taxon>Alphaproteobacteria</taxon>
        <taxon>Hyphomicrobiales</taxon>
        <taxon>Bartonellaceae</taxon>
        <taxon>Bartonella</taxon>
    </lineage>
</organism>
<proteinExistence type="inferred from homology"/>
<accession>A1USA2</accession>
<gene>
    <name evidence="1" type="primary">ispDF</name>
    <name type="ordered locus">BARBAKC583_0540</name>
</gene>
<reference key="1">
    <citation type="submission" date="2006-12" db="EMBL/GenBank/DDBJ databases">
        <authorList>
            <person name="Hendrix L."/>
            <person name="Mohamoud Y."/>
            <person name="Radune D."/>
            <person name="Shvartsbeyn A."/>
            <person name="Daugherty S."/>
            <person name="Dodson R."/>
            <person name="Durkin A.S."/>
            <person name="Harkins D."/>
            <person name="Huot H."/>
            <person name="Kothari S.P."/>
            <person name="Madupu R."/>
            <person name="Li J."/>
            <person name="Nelson W.C."/>
            <person name="Shrivastava S."/>
            <person name="Giglio M.G."/>
            <person name="Haft D."/>
            <person name="Selengut J."/>
            <person name="Fraser-Ligget C."/>
            <person name="Seshadri R."/>
        </authorList>
    </citation>
    <scope>NUCLEOTIDE SEQUENCE [LARGE SCALE GENOMIC DNA]</scope>
    <source>
        <strain>ATCC 35685 / KC583 / Herrer 020/F12,63</strain>
    </source>
</reference>
<feature type="chain" id="PRO_0000292849" description="Bifunctional enzyme IspD/IspF">
    <location>
        <begin position="1"/>
        <end position="397"/>
    </location>
</feature>
<feature type="region of interest" description="2-C-methyl-D-erythritol 4-phosphate cytidylyltransferase" evidence="1">
    <location>
        <begin position="1"/>
        <end position="236"/>
    </location>
</feature>
<feature type="region of interest" description="2-C-methyl-D-erythritol 2,4-cyclodiphosphate synthase" evidence="1">
    <location>
        <begin position="237"/>
        <end position="397"/>
    </location>
</feature>
<feature type="binding site" evidence="1">
    <location>
        <begin position="243"/>
        <end position="245"/>
    </location>
    <ligand>
        <name>4-CDP-2-C-methyl-D-erythritol 2-phosphate</name>
        <dbReference type="ChEBI" id="CHEBI:57919"/>
    </ligand>
</feature>
<feature type="binding site" evidence="1">
    <location>
        <position position="243"/>
    </location>
    <ligand>
        <name>a divalent metal cation</name>
        <dbReference type="ChEBI" id="CHEBI:60240"/>
    </ligand>
</feature>
<feature type="binding site" evidence="1">
    <location>
        <position position="245"/>
    </location>
    <ligand>
        <name>a divalent metal cation</name>
        <dbReference type="ChEBI" id="CHEBI:60240"/>
    </ligand>
</feature>
<feature type="binding site" evidence="1">
    <location>
        <begin position="269"/>
        <end position="270"/>
    </location>
    <ligand>
        <name>4-CDP-2-C-methyl-D-erythritol 2-phosphate</name>
        <dbReference type="ChEBI" id="CHEBI:57919"/>
    </ligand>
</feature>
<feature type="binding site" evidence="1">
    <location>
        <position position="277"/>
    </location>
    <ligand>
        <name>a divalent metal cation</name>
        <dbReference type="ChEBI" id="CHEBI:60240"/>
    </ligand>
</feature>
<feature type="binding site" evidence="1">
    <location>
        <begin position="291"/>
        <end position="293"/>
    </location>
    <ligand>
        <name>4-CDP-2-C-methyl-D-erythritol 2-phosphate</name>
        <dbReference type="ChEBI" id="CHEBI:57919"/>
    </ligand>
</feature>
<feature type="binding site" evidence="1">
    <location>
        <begin position="367"/>
        <end position="370"/>
    </location>
    <ligand>
        <name>4-CDP-2-C-methyl-D-erythritol 2-phosphate</name>
        <dbReference type="ChEBI" id="CHEBI:57919"/>
    </ligand>
</feature>
<feature type="binding site" evidence="1">
    <location>
        <position position="374"/>
    </location>
    <ligand>
        <name>4-CDP-2-C-methyl-D-erythritol 2-phosphate</name>
        <dbReference type="ChEBI" id="CHEBI:57919"/>
    </ligand>
</feature>
<feature type="binding site" evidence="1">
    <location>
        <position position="377"/>
    </location>
    <ligand>
        <name>4-CDP-2-C-methyl-D-erythritol 2-phosphate</name>
        <dbReference type="ChEBI" id="CHEBI:57919"/>
    </ligand>
</feature>
<feature type="site" description="Transition state stabilizer" evidence="1">
    <location>
        <position position="15"/>
    </location>
</feature>
<feature type="site" description="Transition state stabilizer" evidence="1">
    <location>
        <position position="24"/>
    </location>
</feature>
<feature type="site" description="Positions MEP for the nucleophilic attack" evidence="1">
    <location>
        <position position="155"/>
    </location>
</feature>
<feature type="site" description="Positions MEP for the nucleophilic attack" evidence="1">
    <location>
        <position position="212"/>
    </location>
</feature>
<feature type="site" description="Transition state stabilizer" evidence="1">
    <location>
        <position position="269"/>
    </location>
</feature>
<feature type="site" description="Transition state stabilizer" evidence="1">
    <location>
        <position position="368"/>
    </location>
</feature>
<comment type="function">
    <text evidence="1">Bifunctional enzyme that catalyzes the formation of 4-diphosphocytidyl-2-C-methyl-D-erythritol from CTP and 2-C-methyl-D-erythritol 4-phosphate (MEP) (IspD), and catalyzes the conversion of 4-diphosphocytidyl-2-C-methyl-D-erythritol 2-phosphate (CDP-ME2P) to 2-C-methyl-D-erythritol 2,4-cyclodiphosphate (ME-CPP) with a corresponding release of cytidine 5-monophosphate (CMP) (IspF).</text>
</comment>
<comment type="catalytic activity">
    <reaction evidence="1">
        <text>2-C-methyl-D-erythritol 4-phosphate + CTP + H(+) = 4-CDP-2-C-methyl-D-erythritol + diphosphate</text>
        <dbReference type="Rhea" id="RHEA:13429"/>
        <dbReference type="ChEBI" id="CHEBI:15378"/>
        <dbReference type="ChEBI" id="CHEBI:33019"/>
        <dbReference type="ChEBI" id="CHEBI:37563"/>
        <dbReference type="ChEBI" id="CHEBI:57823"/>
        <dbReference type="ChEBI" id="CHEBI:58262"/>
        <dbReference type="EC" id="2.7.7.60"/>
    </reaction>
</comment>
<comment type="catalytic activity">
    <reaction evidence="1">
        <text>4-CDP-2-C-methyl-D-erythritol 2-phosphate = 2-C-methyl-D-erythritol 2,4-cyclic diphosphate + CMP</text>
        <dbReference type="Rhea" id="RHEA:23864"/>
        <dbReference type="ChEBI" id="CHEBI:57919"/>
        <dbReference type="ChEBI" id="CHEBI:58483"/>
        <dbReference type="ChEBI" id="CHEBI:60377"/>
        <dbReference type="EC" id="4.6.1.12"/>
    </reaction>
</comment>
<comment type="cofactor">
    <cofactor evidence="1">
        <name>a divalent metal cation</name>
        <dbReference type="ChEBI" id="CHEBI:60240"/>
    </cofactor>
</comment>
<comment type="pathway">
    <text evidence="1">Isoprenoid biosynthesis; isopentenyl diphosphate biosynthesis via DXP pathway; isopentenyl diphosphate from 1-deoxy-D-xylulose 5-phosphate: step 2/6.</text>
</comment>
<comment type="pathway">
    <text evidence="1">Isoprenoid biosynthesis; isopentenyl diphosphate biosynthesis via DXP pathway; isopentenyl diphosphate from 1-deoxy-D-xylulose 5-phosphate: step 4/6.</text>
</comment>
<comment type="similarity">
    <text evidence="1">In the N-terminal section; belongs to the IspD/TarI cytidylyltransferase family. IspD subfamily.</text>
</comment>
<comment type="similarity">
    <text evidence="1">In the C-terminal section; belongs to the IspF family.</text>
</comment>
<protein>
    <recommendedName>
        <fullName evidence="1">Bifunctional enzyme IspD/IspF</fullName>
    </recommendedName>
    <domain>
        <recommendedName>
            <fullName evidence="1">2-C-methyl-D-erythritol 4-phosphate cytidylyltransferase</fullName>
            <ecNumber evidence="1">2.7.7.60</ecNumber>
        </recommendedName>
        <alternativeName>
            <fullName evidence="1">4-diphosphocytidyl-2C-methyl-D-erythritol synthase</fullName>
        </alternativeName>
        <alternativeName>
            <fullName evidence="1">MEP cytidylyltransferase</fullName>
            <shortName evidence="1">MCT</shortName>
        </alternativeName>
    </domain>
    <domain>
        <recommendedName>
            <fullName evidence="1">2-C-methyl-D-erythritol 2,4-cyclodiphosphate synthase</fullName>
            <shortName evidence="1">MECDP-synthase</shortName>
            <shortName evidence="1">MECPP-synthase</shortName>
            <shortName evidence="1">MECPS</shortName>
            <ecNumber evidence="1">4.6.1.12</ecNumber>
        </recommendedName>
    </domain>
</protein>
<keyword id="KW-0414">Isoprene biosynthesis</keyword>
<keyword id="KW-0456">Lyase</keyword>
<keyword id="KW-0479">Metal-binding</keyword>
<keyword id="KW-0511">Multifunctional enzyme</keyword>
<keyword id="KW-0548">Nucleotidyltransferase</keyword>
<keyword id="KW-0808">Transferase</keyword>
<name>ISPDF_BARBK</name>
<sequence>MSIAAIILAAGRGSRAGSLQNGPKQYRFLGREPVICHTIRCFLQHPAITNIILVIHPDDYQICANAIADLKDHLTIIEGGETRQISTLQGLRALKNVKPNYVHIHDGARPFIGNELLEQIHTSINHKEGILPVLSVSDTLKYVSNTHHVLETIPRTNLYRAQTPQCFPFELILAAHEKAMQSHKQDFTDDSAIAEWFGIPIRTIPGDPNNIKITWPADLETARSYLLKGMQIFPDIRTGNGYDVHSFEDGHYITLCGIKIPFEKKLNGHSDADVALHALTDALLATQGAGDIGTHFPPSDPQWKNASSEIFLHHAIEIIKKAEGRIANVDITLIAEKPKIGPYRHIMTENLMKILKISTDRISIKATTNEKLGFIGREEGIAALATATVIYPGEIPK</sequence>
<evidence type="ECO:0000255" key="1">
    <source>
        <dbReference type="HAMAP-Rule" id="MF_01520"/>
    </source>
</evidence>